<reference key="1">
    <citation type="journal article" date="2000" name="Nature">
        <title>Sequence and analysis of chromosome 5 of the plant Arabidopsis thaliana.</title>
        <authorList>
            <person name="Tabata S."/>
            <person name="Kaneko T."/>
            <person name="Nakamura Y."/>
            <person name="Kotani H."/>
            <person name="Kato T."/>
            <person name="Asamizu E."/>
            <person name="Miyajima N."/>
            <person name="Sasamoto S."/>
            <person name="Kimura T."/>
            <person name="Hosouchi T."/>
            <person name="Kawashima K."/>
            <person name="Kohara M."/>
            <person name="Matsumoto M."/>
            <person name="Matsuno A."/>
            <person name="Muraki A."/>
            <person name="Nakayama S."/>
            <person name="Nakazaki N."/>
            <person name="Naruo K."/>
            <person name="Okumura S."/>
            <person name="Shinpo S."/>
            <person name="Takeuchi C."/>
            <person name="Wada T."/>
            <person name="Watanabe A."/>
            <person name="Yamada M."/>
            <person name="Yasuda M."/>
            <person name="Sato S."/>
            <person name="de la Bastide M."/>
            <person name="Huang E."/>
            <person name="Spiegel L."/>
            <person name="Gnoj L."/>
            <person name="O'Shaughnessy A."/>
            <person name="Preston R."/>
            <person name="Habermann K."/>
            <person name="Murray J."/>
            <person name="Johnson D."/>
            <person name="Rohlfing T."/>
            <person name="Nelson J."/>
            <person name="Stoneking T."/>
            <person name="Pepin K."/>
            <person name="Spieth J."/>
            <person name="Sekhon M."/>
            <person name="Armstrong J."/>
            <person name="Becker M."/>
            <person name="Belter E."/>
            <person name="Cordum H."/>
            <person name="Cordes M."/>
            <person name="Courtney L."/>
            <person name="Courtney W."/>
            <person name="Dante M."/>
            <person name="Du H."/>
            <person name="Edwards J."/>
            <person name="Fryman J."/>
            <person name="Haakensen B."/>
            <person name="Lamar E."/>
            <person name="Latreille P."/>
            <person name="Leonard S."/>
            <person name="Meyer R."/>
            <person name="Mulvaney E."/>
            <person name="Ozersky P."/>
            <person name="Riley A."/>
            <person name="Strowmatt C."/>
            <person name="Wagner-McPherson C."/>
            <person name="Wollam A."/>
            <person name="Yoakum M."/>
            <person name="Bell M."/>
            <person name="Dedhia N."/>
            <person name="Parnell L."/>
            <person name="Shah R."/>
            <person name="Rodriguez M."/>
            <person name="Hoon See L."/>
            <person name="Vil D."/>
            <person name="Baker J."/>
            <person name="Kirchoff K."/>
            <person name="Toth K."/>
            <person name="King L."/>
            <person name="Bahret A."/>
            <person name="Miller B."/>
            <person name="Marra M.A."/>
            <person name="Martienssen R."/>
            <person name="McCombie W.R."/>
            <person name="Wilson R.K."/>
            <person name="Murphy G."/>
            <person name="Bancroft I."/>
            <person name="Volckaert G."/>
            <person name="Wambutt R."/>
            <person name="Duesterhoeft A."/>
            <person name="Stiekema W."/>
            <person name="Pohl T."/>
            <person name="Entian K.-D."/>
            <person name="Terryn N."/>
            <person name="Hartley N."/>
            <person name="Bent E."/>
            <person name="Johnson S."/>
            <person name="Langham S.-A."/>
            <person name="McCullagh B."/>
            <person name="Robben J."/>
            <person name="Grymonprez B."/>
            <person name="Zimmermann W."/>
            <person name="Ramsperger U."/>
            <person name="Wedler H."/>
            <person name="Balke K."/>
            <person name="Wedler E."/>
            <person name="Peters S."/>
            <person name="van Staveren M."/>
            <person name="Dirkse W."/>
            <person name="Mooijman P."/>
            <person name="Klein Lankhorst R."/>
            <person name="Weitzenegger T."/>
            <person name="Bothe G."/>
            <person name="Rose M."/>
            <person name="Hauf J."/>
            <person name="Berneiser S."/>
            <person name="Hempel S."/>
            <person name="Feldpausch M."/>
            <person name="Lamberth S."/>
            <person name="Villarroel R."/>
            <person name="Gielen J."/>
            <person name="Ardiles W."/>
            <person name="Bents O."/>
            <person name="Lemcke K."/>
            <person name="Kolesov G."/>
            <person name="Mayer K.F.X."/>
            <person name="Rudd S."/>
            <person name="Schoof H."/>
            <person name="Schueller C."/>
            <person name="Zaccaria P."/>
            <person name="Mewes H.-W."/>
            <person name="Bevan M."/>
            <person name="Fransz P.F."/>
        </authorList>
    </citation>
    <scope>NUCLEOTIDE SEQUENCE [LARGE SCALE GENOMIC DNA]</scope>
    <source>
        <strain>cv. Columbia</strain>
    </source>
</reference>
<reference key="2">
    <citation type="journal article" date="2017" name="Plant J.">
        <title>Araport11: a complete reannotation of the Arabidopsis thaliana reference genome.</title>
        <authorList>
            <person name="Cheng C.Y."/>
            <person name="Krishnakumar V."/>
            <person name="Chan A.P."/>
            <person name="Thibaud-Nissen F."/>
            <person name="Schobel S."/>
            <person name="Town C.D."/>
        </authorList>
    </citation>
    <scope>GENOME REANNOTATION</scope>
    <source>
        <strain>cv. Columbia</strain>
    </source>
</reference>
<reference key="3">
    <citation type="submission" date="2007-01" db="EMBL/GenBank/DDBJ databases">
        <title>Arabidopsis ORF clones.</title>
        <authorList>
            <person name="Bautista V.R."/>
            <person name="Kim C.J."/>
            <person name="Chen H."/>
            <person name="Wu S.Y."/>
            <person name="De Los Reyes C."/>
            <person name="Ecker J.R."/>
        </authorList>
    </citation>
    <scope>NUCLEOTIDE SEQUENCE [LARGE SCALE MRNA]</scope>
    <source>
        <strain>cv. Columbia</strain>
    </source>
</reference>
<reference key="4">
    <citation type="journal article" date="2007" name="Plant Cell">
        <title>Arabidopsis BRANCHED1 acts as an integrator of branching signals within axillary buds.</title>
        <authorList>
            <person name="Aguilar-Martinez J.A."/>
            <person name="Poza-Carrion C."/>
            <person name="Cubas P."/>
        </authorList>
    </citation>
    <scope>GENE FAMILY</scope>
    <scope>NOMENCLATURE</scope>
</reference>
<reference key="5">
    <citation type="journal article" date="2007" name="Plant Cell">
        <title>TCP transcription factors control the morphology of shoot lateral organs via negative regulation of the expression of boundary-specific genes in Arabidopsis.</title>
        <authorList>
            <person name="Koyama T."/>
            <person name="Furutani M."/>
            <person name="Tasaka M."/>
            <person name="Ohme-Takagi M."/>
        </authorList>
    </citation>
    <scope>FUNCTION</scope>
    <scope>TISSUE SPECIFICITY</scope>
</reference>
<reference key="6">
    <citation type="journal article" date="2014" name="J. Genet. Genomics">
        <title>SPOROCYTELESS is a novel embryophyte-specific transcription repressor that interacts with TPL and TCP proteins in Arabidopsis.</title>
        <authorList>
            <person name="Chen G.H."/>
            <person name="Sun J.Y."/>
            <person name="Liu M."/>
            <person name="Liu J."/>
            <person name="Yang W.C."/>
        </authorList>
    </citation>
    <scope>INTERACTION WITH SPL</scope>
</reference>
<reference key="7">
    <citation type="journal article" date="2015" name="Cell Res.">
        <title>The molecular mechanism of sporocyteless/nozzle in controlling Arabidopsis ovule development.</title>
        <authorList>
            <person name="Wei B."/>
            <person name="Zhang J."/>
            <person name="Pang C."/>
            <person name="Yu H."/>
            <person name="Guo D."/>
            <person name="Jiang H."/>
            <person name="Ding M."/>
            <person name="Chen Z."/>
            <person name="Tao Q."/>
            <person name="Gu H."/>
            <person name="Qu L.J."/>
            <person name="Qin G."/>
        </authorList>
    </citation>
    <scope>FUNCTION</scope>
    <scope>INTERACTION WITH SPL</scope>
    <scope>DEVELOPMENTAL STAGE</scope>
</reference>
<dbReference type="EMBL" id="AL357612">
    <property type="protein sequence ID" value="CAB93708.1"/>
    <property type="molecule type" value="Genomic_DNA"/>
</dbReference>
<dbReference type="EMBL" id="CP002688">
    <property type="protein sequence ID" value="AED91241.1"/>
    <property type="molecule type" value="Genomic_DNA"/>
</dbReference>
<dbReference type="EMBL" id="CP002688">
    <property type="protein sequence ID" value="ANM69189.1"/>
    <property type="molecule type" value="Genomic_DNA"/>
</dbReference>
<dbReference type="EMBL" id="BT029995">
    <property type="protein sequence ID" value="ABN04733.1"/>
    <property type="molecule type" value="mRNA"/>
</dbReference>
<dbReference type="PIR" id="T50492">
    <property type="entry name" value="T50492"/>
</dbReference>
<dbReference type="RefSeq" id="NP_001318505.1">
    <property type="nucleotide sequence ID" value="NM_001342977.1"/>
</dbReference>
<dbReference type="RefSeq" id="NP_196424.1">
    <property type="nucleotide sequence ID" value="NM_120889.1"/>
</dbReference>
<dbReference type="SMR" id="Q9LEZ9"/>
<dbReference type="BioGRID" id="15979">
    <property type="interactions" value="38"/>
</dbReference>
<dbReference type="IntAct" id="Q9LEZ9">
    <property type="interactions" value="29"/>
</dbReference>
<dbReference type="STRING" id="3702.Q9LEZ9"/>
<dbReference type="PaxDb" id="3702-AT5G08070.1"/>
<dbReference type="EnsemblPlants" id="AT5G08070.1">
    <property type="protein sequence ID" value="AT5G08070.1"/>
    <property type="gene ID" value="AT5G08070"/>
</dbReference>
<dbReference type="EnsemblPlants" id="AT5G08070.2">
    <property type="protein sequence ID" value="AT5G08070.2"/>
    <property type="gene ID" value="AT5G08070"/>
</dbReference>
<dbReference type="GeneID" id="830701"/>
<dbReference type="Gramene" id="AT5G08070.1">
    <property type="protein sequence ID" value="AT5G08070.1"/>
    <property type="gene ID" value="AT5G08070"/>
</dbReference>
<dbReference type="Gramene" id="AT5G08070.2">
    <property type="protein sequence ID" value="AT5G08070.2"/>
    <property type="gene ID" value="AT5G08070"/>
</dbReference>
<dbReference type="KEGG" id="ath:AT5G08070"/>
<dbReference type="Araport" id="AT5G08070"/>
<dbReference type="TAIR" id="AT5G08070">
    <property type="gene designation" value="TCP17"/>
</dbReference>
<dbReference type="eggNOG" id="ENOG502QS1Y">
    <property type="taxonomic scope" value="Eukaryota"/>
</dbReference>
<dbReference type="HOGENOM" id="CLU_064607_0_0_1"/>
<dbReference type="InParanoid" id="Q9LEZ9"/>
<dbReference type="OMA" id="CHYNLEQ"/>
<dbReference type="PhylomeDB" id="Q9LEZ9"/>
<dbReference type="PRO" id="PR:Q9LEZ9"/>
<dbReference type="Proteomes" id="UP000006548">
    <property type="component" value="Chromosome 5"/>
</dbReference>
<dbReference type="ExpressionAtlas" id="Q9LEZ9">
    <property type="expression patterns" value="baseline and differential"/>
</dbReference>
<dbReference type="GO" id="GO:0005634">
    <property type="term" value="C:nucleus"/>
    <property type="evidence" value="ECO:0007669"/>
    <property type="project" value="UniProtKB-SubCell"/>
</dbReference>
<dbReference type="GO" id="GO:0003677">
    <property type="term" value="F:DNA binding"/>
    <property type="evidence" value="ECO:0007669"/>
    <property type="project" value="UniProtKB-KW"/>
</dbReference>
<dbReference type="GO" id="GO:0003700">
    <property type="term" value="F:DNA-binding transcription factor activity"/>
    <property type="evidence" value="ECO:0000250"/>
    <property type="project" value="TAIR"/>
</dbReference>
<dbReference type="GO" id="GO:0048366">
    <property type="term" value="P:leaf development"/>
    <property type="evidence" value="ECO:0000316"/>
    <property type="project" value="TAIR"/>
</dbReference>
<dbReference type="GO" id="GO:0010150">
    <property type="term" value="P:leaf senescence"/>
    <property type="evidence" value="ECO:0000316"/>
    <property type="project" value="TAIR"/>
</dbReference>
<dbReference type="GO" id="GO:0006355">
    <property type="term" value="P:regulation of DNA-templated transcription"/>
    <property type="evidence" value="ECO:0000304"/>
    <property type="project" value="TAIR"/>
</dbReference>
<dbReference type="InterPro" id="IPR017887">
    <property type="entry name" value="TF_TCP_subgr"/>
</dbReference>
<dbReference type="InterPro" id="IPR005333">
    <property type="entry name" value="Transcription_factor_TCP"/>
</dbReference>
<dbReference type="PANTHER" id="PTHR31072:SF231">
    <property type="entry name" value="TRANSCRIPTION FACTOR TCP17"/>
    <property type="match status" value="1"/>
</dbReference>
<dbReference type="PANTHER" id="PTHR31072">
    <property type="entry name" value="TRANSCRIPTION FACTOR TCP4-RELATED"/>
    <property type="match status" value="1"/>
</dbReference>
<dbReference type="Pfam" id="PF03634">
    <property type="entry name" value="TCP"/>
    <property type="match status" value="1"/>
</dbReference>
<dbReference type="PROSITE" id="PS51369">
    <property type="entry name" value="TCP"/>
    <property type="match status" value="1"/>
</dbReference>
<gene>
    <name type="primary">TCP17</name>
    <name type="ordered locus">At5g08070</name>
    <name type="ORF">T22D6.10</name>
</gene>
<protein>
    <recommendedName>
        <fullName>Transcription factor TCP17</fullName>
    </recommendedName>
</protein>
<accession>Q9LEZ9</accession>
<organism>
    <name type="scientific">Arabidopsis thaliana</name>
    <name type="common">Mouse-ear cress</name>
    <dbReference type="NCBI Taxonomy" id="3702"/>
    <lineage>
        <taxon>Eukaryota</taxon>
        <taxon>Viridiplantae</taxon>
        <taxon>Streptophyta</taxon>
        <taxon>Embryophyta</taxon>
        <taxon>Tracheophyta</taxon>
        <taxon>Spermatophyta</taxon>
        <taxon>Magnoliopsida</taxon>
        <taxon>eudicotyledons</taxon>
        <taxon>Gunneridae</taxon>
        <taxon>Pentapetalae</taxon>
        <taxon>rosids</taxon>
        <taxon>malvids</taxon>
        <taxon>Brassicales</taxon>
        <taxon>Brassicaceae</taxon>
        <taxon>Camelineae</taxon>
        <taxon>Arabidopsis</taxon>
    </lineage>
</organism>
<keyword id="KW-0217">Developmental protein</keyword>
<keyword id="KW-0238">DNA-binding</keyword>
<keyword id="KW-0539">Nucleus</keyword>
<keyword id="KW-1185">Reference proteome</keyword>
<keyword id="KW-0804">Transcription</keyword>
<keyword id="KW-0805">Transcription regulation</keyword>
<evidence type="ECO:0000255" key="1">
    <source>
        <dbReference type="PROSITE-ProRule" id="PRU00701"/>
    </source>
</evidence>
<evidence type="ECO:0000269" key="2">
    <source>
    </source>
</evidence>
<evidence type="ECO:0000269" key="3">
    <source>
    </source>
</evidence>
<evidence type="ECO:0000269" key="4">
    <source>
    </source>
</evidence>
<evidence type="ECO:0000305" key="5"/>
<comment type="function">
    <text evidence="2 3">Plays a pivotal role in the control of morphogenesis of shoot organs by negatively regulating the expression of boundary-specific genes such as CUC genes, probably through the induction of miRNA (e.g. miR164). Participates in ovule development (PubMed:25378179).</text>
</comment>
<comment type="subunit">
    <text evidence="3 4">Interacts with SPL.</text>
</comment>
<comment type="interaction">
    <interactant intactId="EBI-15192327">
        <id>Q9LEZ9</id>
    </interactant>
    <interactant intactId="EBI-1798250">
        <id>Q39011</id>
        <label>ASK7</label>
    </interactant>
    <organismsDiffer>false</organismsDiffer>
    <experiments>4</experiments>
</comment>
<comment type="interaction">
    <interactant intactId="EBI-15192327">
        <id>Q9LEZ9</id>
    </interactant>
    <interactant intactId="EBI-963606">
        <id>Q9LQT8</id>
        <label>GAI</label>
    </interactant>
    <organismsDiffer>false</organismsDiffer>
    <experiments>3</experiments>
</comment>
<comment type="interaction">
    <interactant intactId="EBI-15192327">
        <id>Q9LEZ9</id>
    </interactant>
    <interactant intactId="EBI-15196469">
        <id>Q94C37</id>
        <label>HDG2</label>
    </interactant>
    <organismsDiffer>false</organismsDiffer>
    <experiments>3</experiments>
</comment>
<comment type="interaction">
    <interactant intactId="EBI-15192327">
        <id>Q9LEZ9</id>
    </interactant>
    <interactant intactId="EBI-530486">
        <id>P46639</id>
        <label>KNAT1</label>
    </interactant>
    <organismsDiffer>false</organismsDiffer>
    <experiments>3</experiments>
</comment>
<comment type="interaction">
    <interactant intactId="EBI-15192327">
        <id>Q9LEZ9</id>
    </interactant>
    <interactant intactId="EBI-963665">
        <id>Q8GXW1</id>
        <label>RGL2</label>
    </interactant>
    <organismsDiffer>false</organismsDiffer>
    <experiments>3</experiments>
</comment>
<comment type="interaction">
    <interactant intactId="EBI-15192327">
        <id>Q9LEZ9</id>
    </interactant>
    <interactant intactId="EBI-15681313">
        <id>Q9LF53</id>
        <label>RGL3</label>
    </interactant>
    <organismsDiffer>false</organismsDiffer>
    <experiments>3</experiments>
</comment>
<comment type="interaction">
    <interactant intactId="EBI-15192327">
        <id>Q9LEZ9</id>
    </interactant>
    <interactant intactId="EBI-15192325">
        <id>Q8LPR5</id>
        <label>TCP4</label>
    </interactant>
    <organismsDiffer>false</organismsDiffer>
    <experiments>3</experiments>
</comment>
<comment type="subcellular location">
    <subcellularLocation>
        <location evidence="5">Nucleus</location>
    </subcellularLocation>
</comment>
<comment type="tissue specificity">
    <text evidence="2">Expressed in cotyledons, particularly in the vascular region, in leaves, roots, stems, buds, flowers and siliques.</text>
</comment>
<comment type="developmental stage">
    <text evidence="3">Expressed during ovule development (PubMed:25378179).</text>
</comment>
<name>TCP17_ARATH</name>
<proteinExistence type="evidence at protein level"/>
<sequence>MGIKKEDQKSSLSLLTQRWNNPRIVRVSRAFGGKDRHSKVCTVRGLRDRRIRLSVMTAIQVYDLQERLGLSQPSKVIDWLLEVAKNDVDLLPPLQFPPGFHQLNPNLTGLGESFPGVFDLGRTQREALDLEKRKWVNLDHVFDHIDHHNHFSNSIQSNKLYFPTITSSSSSYHYNLGHLQQSLLDQSGNVTVAFSNNYNNNNLNPPAAETMSSLFPTRYPSFLGGGQLQLFSSTSSQPDHIE</sequence>
<feature type="chain" id="PRO_0000330791" description="Transcription factor TCP17">
    <location>
        <begin position="1"/>
        <end position="242"/>
    </location>
</feature>
<feature type="domain" description="TCP" evidence="1">
    <location>
        <begin position="33"/>
        <end position="91"/>
    </location>
</feature>